<keyword id="KW-1185">Reference proteome</keyword>
<keyword id="KW-0687">Ribonucleoprotein</keyword>
<keyword id="KW-0689">Ribosomal protein</keyword>
<keyword id="KW-0694">RNA-binding</keyword>
<keyword id="KW-0699">rRNA-binding</keyword>
<sequence length="129" mass="13845">MAKAPIRARKRVRKQVSDGVAHIHASFNNTIVTITDRQGNALGWATAGGSGFRGSRKSTPFAAQVAAERCADAVKEYGIKNLEVMVKGPGPGRESTIRALNAAGFRITNITDVTPIPHNGCRPPKKRRV</sequence>
<accession>A9MN70</accession>
<name>RS11_SALAR</name>
<reference key="1">
    <citation type="submission" date="2007-11" db="EMBL/GenBank/DDBJ databases">
        <authorList>
            <consortium name="The Salmonella enterica serovar Arizonae Genome Sequencing Project"/>
            <person name="McClelland M."/>
            <person name="Sanderson E.K."/>
            <person name="Porwollik S."/>
            <person name="Spieth J."/>
            <person name="Clifton W.S."/>
            <person name="Fulton R."/>
            <person name="Chunyan W."/>
            <person name="Wollam A."/>
            <person name="Shah N."/>
            <person name="Pepin K."/>
            <person name="Bhonagiri V."/>
            <person name="Nash W."/>
            <person name="Johnson M."/>
            <person name="Thiruvilangam P."/>
            <person name="Wilson R."/>
        </authorList>
    </citation>
    <scope>NUCLEOTIDE SEQUENCE [LARGE SCALE GENOMIC DNA]</scope>
    <source>
        <strain>ATCC BAA-731 / CDC346-86 / RSK2980</strain>
    </source>
</reference>
<organism>
    <name type="scientific">Salmonella arizonae (strain ATCC BAA-731 / CDC346-86 / RSK2980)</name>
    <dbReference type="NCBI Taxonomy" id="41514"/>
    <lineage>
        <taxon>Bacteria</taxon>
        <taxon>Pseudomonadati</taxon>
        <taxon>Pseudomonadota</taxon>
        <taxon>Gammaproteobacteria</taxon>
        <taxon>Enterobacterales</taxon>
        <taxon>Enterobacteriaceae</taxon>
        <taxon>Salmonella</taxon>
    </lineage>
</organism>
<proteinExistence type="inferred from homology"/>
<evidence type="ECO:0000255" key="1">
    <source>
        <dbReference type="HAMAP-Rule" id="MF_01310"/>
    </source>
</evidence>
<evidence type="ECO:0000305" key="2"/>
<feature type="chain" id="PRO_1000086207" description="Small ribosomal subunit protein uS11">
    <location>
        <begin position="1"/>
        <end position="129"/>
    </location>
</feature>
<protein>
    <recommendedName>
        <fullName evidence="1">Small ribosomal subunit protein uS11</fullName>
    </recommendedName>
    <alternativeName>
        <fullName evidence="2">30S ribosomal protein S11</fullName>
    </alternativeName>
</protein>
<comment type="function">
    <text evidence="1">Located on the platform of the 30S subunit, it bridges several disparate RNA helices of the 16S rRNA. Forms part of the Shine-Dalgarno cleft in the 70S ribosome.</text>
</comment>
<comment type="subunit">
    <text evidence="1">Part of the 30S ribosomal subunit. Interacts with proteins S7 and S18. Binds to IF-3.</text>
</comment>
<comment type="similarity">
    <text evidence="1">Belongs to the universal ribosomal protein uS11 family.</text>
</comment>
<dbReference type="EMBL" id="CP000880">
    <property type="protein sequence ID" value="ABX24000.1"/>
    <property type="molecule type" value="Genomic_DNA"/>
</dbReference>
<dbReference type="SMR" id="A9MN70"/>
<dbReference type="STRING" id="41514.SARI_04211"/>
<dbReference type="KEGG" id="ses:SARI_04211"/>
<dbReference type="HOGENOM" id="CLU_072439_5_0_6"/>
<dbReference type="Proteomes" id="UP000002084">
    <property type="component" value="Chromosome"/>
</dbReference>
<dbReference type="GO" id="GO:1990904">
    <property type="term" value="C:ribonucleoprotein complex"/>
    <property type="evidence" value="ECO:0007669"/>
    <property type="project" value="UniProtKB-KW"/>
</dbReference>
<dbReference type="GO" id="GO:0005840">
    <property type="term" value="C:ribosome"/>
    <property type="evidence" value="ECO:0007669"/>
    <property type="project" value="UniProtKB-KW"/>
</dbReference>
<dbReference type="GO" id="GO:0019843">
    <property type="term" value="F:rRNA binding"/>
    <property type="evidence" value="ECO:0007669"/>
    <property type="project" value="UniProtKB-UniRule"/>
</dbReference>
<dbReference type="GO" id="GO:0003735">
    <property type="term" value="F:structural constituent of ribosome"/>
    <property type="evidence" value="ECO:0007669"/>
    <property type="project" value="InterPro"/>
</dbReference>
<dbReference type="GO" id="GO:0006412">
    <property type="term" value="P:translation"/>
    <property type="evidence" value="ECO:0007669"/>
    <property type="project" value="UniProtKB-UniRule"/>
</dbReference>
<dbReference type="FunFam" id="3.30.420.80:FF:000001">
    <property type="entry name" value="30S ribosomal protein S11"/>
    <property type="match status" value="1"/>
</dbReference>
<dbReference type="Gene3D" id="3.30.420.80">
    <property type="entry name" value="Ribosomal protein S11"/>
    <property type="match status" value="1"/>
</dbReference>
<dbReference type="HAMAP" id="MF_01310">
    <property type="entry name" value="Ribosomal_uS11"/>
    <property type="match status" value="1"/>
</dbReference>
<dbReference type="InterPro" id="IPR001971">
    <property type="entry name" value="Ribosomal_uS11"/>
</dbReference>
<dbReference type="InterPro" id="IPR019981">
    <property type="entry name" value="Ribosomal_uS11_bac-type"/>
</dbReference>
<dbReference type="InterPro" id="IPR018102">
    <property type="entry name" value="Ribosomal_uS11_CS"/>
</dbReference>
<dbReference type="InterPro" id="IPR036967">
    <property type="entry name" value="Ribosomal_uS11_sf"/>
</dbReference>
<dbReference type="NCBIfam" id="NF003698">
    <property type="entry name" value="PRK05309.1"/>
    <property type="match status" value="1"/>
</dbReference>
<dbReference type="NCBIfam" id="TIGR03632">
    <property type="entry name" value="uS11_bact"/>
    <property type="match status" value="1"/>
</dbReference>
<dbReference type="PANTHER" id="PTHR11759">
    <property type="entry name" value="40S RIBOSOMAL PROTEIN S14/30S RIBOSOMAL PROTEIN S11"/>
    <property type="match status" value="1"/>
</dbReference>
<dbReference type="Pfam" id="PF00411">
    <property type="entry name" value="Ribosomal_S11"/>
    <property type="match status" value="1"/>
</dbReference>
<dbReference type="PIRSF" id="PIRSF002131">
    <property type="entry name" value="Ribosomal_S11"/>
    <property type="match status" value="1"/>
</dbReference>
<dbReference type="SUPFAM" id="SSF53137">
    <property type="entry name" value="Translational machinery components"/>
    <property type="match status" value="1"/>
</dbReference>
<dbReference type="PROSITE" id="PS00054">
    <property type="entry name" value="RIBOSOMAL_S11"/>
    <property type="match status" value="1"/>
</dbReference>
<gene>
    <name evidence="1" type="primary">rpsK</name>
    <name type="ordered locus">SARI_04211</name>
</gene>